<gene>
    <name evidence="1" type="primary">mnmE</name>
    <name evidence="1" type="synonym">trmE</name>
    <name type="ordered locus">YPTB3949</name>
</gene>
<accession>Q663S6</accession>
<name>MNME_YERPS</name>
<comment type="function">
    <text evidence="1">Exhibits a very high intrinsic GTPase hydrolysis rate. Involved in the addition of a carboxymethylaminomethyl (cmnm) group at the wobble position (U34) of certain tRNAs, forming tRNA-cmnm(5)s(2)U34.</text>
</comment>
<comment type="cofactor">
    <cofactor evidence="1">
        <name>K(+)</name>
        <dbReference type="ChEBI" id="CHEBI:29103"/>
    </cofactor>
    <text evidence="1">Binds 1 potassium ion per subunit.</text>
</comment>
<comment type="subunit">
    <text evidence="1">Homodimer. Heterotetramer of two MnmE and two MnmG subunits.</text>
</comment>
<comment type="subcellular location">
    <subcellularLocation>
        <location evidence="1">Cytoplasm</location>
    </subcellularLocation>
</comment>
<comment type="similarity">
    <text evidence="1">Belongs to the TRAFAC class TrmE-Era-EngA-EngB-Septin-like GTPase superfamily. TrmE GTPase family.</text>
</comment>
<sequence>MSTTDTIVAQATPPGRGGVGILRVSGRAASEVAHAVLGKLPKPRYADYLPFKDVDGSTLDQGIALYFPGPNSFTGEDVLELQGHGGPVILDLLLKRILALPGLRIARPGEFSERAFLNDKLDLAQAEAIADLIDASSEQAARSAVNSLQGAFSARIHQLVEALTHLRIYVEAAIDFPDEEIDFLSDGKIEGQLNGVMADLEQVRTEARQGSLLREGMKVVIAGRPNAGKSSLLNALAGREAAIVTDIAGTTRDVLREHIHIDGMPLHIIDTAGLREANDEVERIGIERAWNEIEQADRVLFMVDGTTTDATEPAAIWPEFMARLPATLPITVVRNKADITGETLGLTKVNGHSLIRLSARTGEGIDLLRDHLKQSMGFTSNTEGGFLARRRHLQALETAARHLVQGHEQLVSAYAGELLAEELRLAQQSLSEITGEFSSDDLLGRIFSSFCIGK</sequence>
<protein>
    <recommendedName>
        <fullName evidence="1">tRNA modification GTPase MnmE</fullName>
        <ecNumber evidence="1">3.6.-.-</ecNumber>
    </recommendedName>
</protein>
<evidence type="ECO:0000255" key="1">
    <source>
        <dbReference type="HAMAP-Rule" id="MF_00379"/>
    </source>
</evidence>
<keyword id="KW-0963">Cytoplasm</keyword>
<keyword id="KW-0342">GTP-binding</keyword>
<keyword id="KW-0378">Hydrolase</keyword>
<keyword id="KW-0460">Magnesium</keyword>
<keyword id="KW-0479">Metal-binding</keyword>
<keyword id="KW-0547">Nucleotide-binding</keyword>
<keyword id="KW-0630">Potassium</keyword>
<keyword id="KW-0819">tRNA processing</keyword>
<organism>
    <name type="scientific">Yersinia pseudotuberculosis serotype I (strain IP32953)</name>
    <dbReference type="NCBI Taxonomy" id="273123"/>
    <lineage>
        <taxon>Bacteria</taxon>
        <taxon>Pseudomonadati</taxon>
        <taxon>Pseudomonadota</taxon>
        <taxon>Gammaproteobacteria</taxon>
        <taxon>Enterobacterales</taxon>
        <taxon>Yersiniaceae</taxon>
        <taxon>Yersinia</taxon>
    </lineage>
</organism>
<feature type="chain" id="PRO_1000048912" description="tRNA modification GTPase MnmE">
    <location>
        <begin position="1"/>
        <end position="454"/>
    </location>
</feature>
<feature type="domain" description="TrmE-type G">
    <location>
        <begin position="216"/>
        <end position="377"/>
    </location>
</feature>
<feature type="binding site" evidence="1">
    <location>
        <position position="23"/>
    </location>
    <ligand>
        <name>(6S)-5-formyl-5,6,7,8-tetrahydrofolate</name>
        <dbReference type="ChEBI" id="CHEBI:57457"/>
    </ligand>
</feature>
<feature type="binding site" evidence="1">
    <location>
        <position position="80"/>
    </location>
    <ligand>
        <name>(6S)-5-formyl-5,6,7,8-tetrahydrofolate</name>
        <dbReference type="ChEBI" id="CHEBI:57457"/>
    </ligand>
</feature>
<feature type="binding site" evidence="1">
    <location>
        <position position="120"/>
    </location>
    <ligand>
        <name>(6S)-5-formyl-5,6,7,8-tetrahydrofolate</name>
        <dbReference type="ChEBI" id="CHEBI:57457"/>
    </ligand>
</feature>
<feature type="binding site" evidence="1">
    <location>
        <begin position="226"/>
        <end position="231"/>
    </location>
    <ligand>
        <name>GTP</name>
        <dbReference type="ChEBI" id="CHEBI:37565"/>
    </ligand>
</feature>
<feature type="binding site" evidence="1">
    <location>
        <position position="226"/>
    </location>
    <ligand>
        <name>K(+)</name>
        <dbReference type="ChEBI" id="CHEBI:29103"/>
    </ligand>
</feature>
<feature type="binding site" evidence="1">
    <location>
        <position position="230"/>
    </location>
    <ligand>
        <name>Mg(2+)</name>
        <dbReference type="ChEBI" id="CHEBI:18420"/>
    </ligand>
</feature>
<feature type="binding site" evidence="1">
    <location>
        <begin position="245"/>
        <end position="251"/>
    </location>
    <ligand>
        <name>GTP</name>
        <dbReference type="ChEBI" id="CHEBI:37565"/>
    </ligand>
</feature>
<feature type="binding site" evidence="1">
    <location>
        <position position="245"/>
    </location>
    <ligand>
        <name>K(+)</name>
        <dbReference type="ChEBI" id="CHEBI:29103"/>
    </ligand>
</feature>
<feature type="binding site" evidence="1">
    <location>
        <position position="247"/>
    </location>
    <ligand>
        <name>K(+)</name>
        <dbReference type="ChEBI" id="CHEBI:29103"/>
    </ligand>
</feature>
<feature type="binding site" evidence="1">
    <location>
        <position position="250"/>
    </location>
    <ligand>
        <name>K(+)</name>
        <dbReference type="ChEBI" id="CHEBI:29103"/>
    </ligand>
</feature>
<feature type="binding site" evidence="1">
    <location>
        <position position="251"/>
    </location>
    <ligand>
        <name>Mg(2+)</name>
        <dbReference type="ChEBI" id="CHEBI:18420"/>
    </ligand>
</feature>
<feature type="binding site" evidence="1">
    <location>
        <begin position="270"/>
        <end position="273"/>
    </location>
    <ligand>
        <name>GTP</name>
        <dbReference type="ChEBI" id="CHEBI:37565"/>
    </ligand>
</feature>
<feature type="binding site" evidence="1">
    <location>
        <begin position="335"/>
        <end position="338"/>
    </location>
    <ligand>
        <name>GTP</name>
        <dbReference type="ChEBI" id="CHEBI:37565"/>
    </ligand>
</feature>
<feature type="binding site" evidence="1">
    <location>
        <begin position="358"/>
        <end position="360"/>
    </location>
    <ligand>
        <name>GTP</name>
        <dbReference type="ChEBI" id="CHEBI:37565"/>
    </ligand>
</feature>
<feature type="binding site" evidence="1">
    <location>
        <position position="454"/>
    </location>
    <ligand>
        <name>(6S)-5-formyl-5,6,7,8-tetrahydrofolate</name>
        <dbReference type="ChEBI" id="CHEBI:57457"/>
    </ligand>
</feature>
<proteinExistence type="inferred from homology"/>
<dbReference type="EC" id="3.6.-.-" evidence="1"/>
<dbReference type="EMBL" id="BX936398">
    <property type="protein sequence ID" value="CAH23187.1"/>
    <property type="molecule type" value="Genomic_DNA"/>
</dbReference>
<dbReference type="RefSeq" id="WP_011193350.1">
    <property type="nucleotide sequence ID" value="NC_006155.1"/>
</dbReference>
<dbReference type="SMR" id="Q663S6"/>
<dbReference type="GeneID" id="49788066"/>
<dbReference type="KEGG" id="ypo:BZ17_2627"/>
<dbReference type="KEGG" id="yps:YPTB3949"/>
<dbReference type="PATRIC" id="fig|273123.14.peg.2753"/>
<dbReference type="Proteomes" id="UP000001011">
    <property type="component" value="Chromosome"/>
</dbReference>
<dbReference type="GO" id="GO:0005829">
    <property type="term" value="C:cytosol"/>
    <property type="evidence" value="ECO:0007669"/>
    <property type="project" value="TreeGrafter"/>
</dbReference>
<dbReference type="GO" id="GO:0005525">
    <property type="term" value="F:GTP binding"/>
    <property type="evidence" value="ECO:0007669"/>
    <property type="project" value="UniProtKB-UniRule"/>
</dbReference>
<dbReference type="GO" id="GO:0003924">
    <property type="term" value="F:GTPase activity"/>
    <property type="evidence" value="ECO:0007669"/>
    <property type="project" value="UniProtKB-UniRule"/>
</dbReference>
<dbReference type="GO" id="GO:0046872">
    <property type="term" value="F:metal ion binding"/>
    <property type="evidence" value="ECO:0007669"/>
    <property type="project" value="UniProtKB-KW"/>
</dbReference>
<dbReference type="GO" id="GO:0030488">
    <property type="term" value="P:tRNA methylation"/>
    <property type="evidence" value="ECO:0007669"/>
    <property type="project" value="TreeGrafter"/>
</dbReference>
<dbReference type="GO" id="GO:0002098">
    <property type="term" value="P:tRNA wobble uridine modification"/>
    <property type="evidence" value="ECO:0007669"/>
    <property type="project" value="TreeGrafter"/>
</dbReference>
<dbReference type="CDD" id="cd04164">
    <property type="entry name" value="trmE"/>
    <property type="match status" value="1"/>
</dbReference>
<dbReference type="CDD" id="cd14858">
    <property type="entry name" value="TrmE_N"/>
    <property type="match status" value="1"/>
</dbReference>
<dbReference type="FunFam" id="3.30.1360.120:FF:000001">
    <property type="entry name" value="tRNA modification GTPase MnmE"/>
    <property type="match status" value="1"/>
</dbReference>
<dbReference type="FunFam" id="3.40.50.300:FF:000249">
    <property type="entry name" value="tRNA modification GTPase MnmE"/>
    <property type="match status" value="1"/>
</dbReference>
<dbReference type="Gene3D" id="3.40.50.300">
    <property type="entry name" value="P-loop containing nucleotide triphosphate hydrolases"/>
    <property type="match status" value="1"/>
</dbReference>
<dbReference type="Gene3D" id="3.30.1360.120">
    <property type="entry name" value="Probable tRNA modification gtpase trme, domain 1"/>
    <property type="match status" value="1"/>
</dbReference>
<dbReference type="Gene3D" id="1.20.120.430">
    <property type="entry name" value="tRNA modification GTPase MnmE domain 2"/>
    <property type="match status" value="1"/>
</dbReference>
<dbReference type="HAMAP" id="MF_00379">
    <property type="entry name" value="GTPase_MnmE"/>
    <property type="match status" value="1"/>
</dbReference>
<dbReference type="InterPro" id="IPR031168">
    <property type="entry name" value="G_TrmE"/>
</dbReference>
<dbReference type="InterPro" id="IPR006073">
    <property type="entry name" value="GTP-bd"/>
</dbReference>
<dbReference type="InterPro" id="IPR018948">
    <property type="entry name" value="GTP-bd_TrmE_N"/>
</dbReference>
<dbReference type="InterPro" id="IPR004520">
    <property type="entry name" value="GTPase_MnmE"/>
</dbReference>
<dbReference type="InterPro" id="IPR027368">
    <property type="entry name" value="MnmE_dom2"/>
</dbReference>
<dbReference type="InterPro" id="IPR025867">
    <property type="entry name" value="MnmE_helical"/>
</dbReference>
<dbReference type="InterPro" id="IPR027417">
    <property type="entry name" value="P-loop_NTPase"/>
</dbReference>
<dbReference type="InterPro" id="IPR005225">
    <property type="entry name" value="Small_GTP-bd"/>
</dbReference>
<dbReference type="InterPro" id="IPR027266">
    <property type="entry name" value="TrmE/GcvT_dom1"/>
</dbReference>
<dbReference type="NCBIfam" id="TIGR00450">
    <property type="entry name" value="mnmE_trmE_thdF"/>
    <property type="match status" value="1"/>
</dbReference>
<dbReference type="NCBIfam" id="NF003661">
    <property type="entry name" value="PRK05291.1-3"/>
    <property type="match status" value="1"/>
</dbReference>
<dbReference type="NCBIfam" id="TIGR00231">
    <property type="entry name" value="small_GTP"/>
    <property type="match status" value="1"/>
</dbReference>
<dbReference type="PANTHER" id="PTHR42714">
    <property type="entry name" value="TRNA MODIFICATION GTPASE GTPBP3"/>
    <property type="match status" value="1"/>
</dbReference>
<dbReference type="PANTHER" id="PTHR42714:SF2">
    <property type="entry name" value="TRNA MODIFICATION GTPASE GTPBP3, MITOCHONDRIAL"/>
    <property type="match status" value="1"/>
</dbReference>
<dbReference type="Pfam" id="PF01926">
    <property type="entry name" value="MMR_HSR1"/>
    <property type="match status" value="1"/>
</dbReference>
<dbReference type="Pfam" id="PF12631">
    <property type="entry name" value="MnmE_helical"/>
    <property type="match status" value="1"/>
</dbReference>
<dbReference type="Pfam" id="PF10396">
    <property type="entry name" value="TrmE_N"/>
    <property type="match status" value="1"/>
</dbReference>
<dbReference type="SUPFAM" id="SSF52540">
    <property type="entry name" value="P-loop containing nucleoside triphosphate hydrolases"/>
    <property type="match status" value="1"/>
</dbReference>
<dbReference type="SUPFAM" id="SSF116878">
    <property type="entry name" value="TrmE connector domain"/>
    <property type="match status" value="1"/>
</dbReference>
<dbReference type="PROSITE" id="PS51709">
    <property type="entry name" value="G_TRME"/>
    <property type="match status" value="1"/>
</dbReference>
<reference key="1">
    <citation type="journal article" date="2004" name="Proc. Natl. Acad. Sci. U.S.A.">
        <title>Insights into the evolution of Yersinia pestis through whole-genome comparison with Yersinia pseudotuberculosis.</title>
        <authorList>
            <person name="Chain P.S.G."/>
            <person name="Carniel E."/>
            <person name="Larimer F.W."/>
            <person name="Lamerdin J."/>
            <person name="Stoutland P.O."/>
            <person name="Regala W.M."/>
            <person name="Georgescu A.M."/>
            <person name="Vergez L.M."/>
            <person name="Land M.L."/>
            <person name="Motin V.L."/>
            <person name="Brubaker R.R."/>
            <person name="Fowler J."/>
            <person name="Hinnebusch J."/>
            <person name="Marceau M."/>
            <person name="Medigue C."/>
            <person name="Simonet M."/>
            <person name="Chenal-Francisque V."/>
            <person name="Souza B."/>
            <person name="Dacheux D."/>
            <person name="Elliott J.M."/>
            <person name="Derbise A."/>
            <person name="Hauser L.J."/>
            <person name="Garcia E."/>
        </authorList>
    </citation>
    <scope>NUCLEOTIDE SEQUENCE [LARGE SCALE GENOMIC DNA]</scope>
    <source>
        <strain>IP32953</strain>
    </source>
</reference>